<sequence length="308" mass="34967">MTEDKKVSVSMFIKELELEVVHKGENTDYEIISSDINRPALQFAGFFEHFAYDRVQVIGKGEHDYFGTLDRATRLRRLEKLFSYEIPVLVLARGLDFSSDTINMAKKYNRIIIRSQMSTTKFINKASGYLSEKLAPSKTVHGVLVDIYGIGVLLMGKSGVGKSETALELVKRGHRLVADDAVEIRRIEDDMLVGEAPDILKYLMEIRGVGILDIKNLYGVGAIRTNKVVEMVAELEYWEEGKYYDRLGIDEEYMTLLDVPVEKIVIPVKPGRNLAMIIEVAAKNYRQKNMGYNAAKIFNEKLLKKLSD</sequence>
<organism>
    <name type="scientific">Peptoclostridium acidaminophilum</name>
    <name type="common">Eubacterium acidaminophilum</name>
    <dbReference type="NCBI Taxonomy" id="1731"/>
    <lineage>
        <taxon>Bacteria</taxon>
        <taxon>Bacillati</taxon>
        <taxon>Bacillota</taxon>
        <taxon>Clostridia</taxon>
        <taxon>Peptostreptococcales</taxon>
        <taxon>Peptoclostridiaceae</taxon>
        <taxon>Peptoclostridium</taxon>
    </lineage>
</organism>
<dbReference type="EC" id="2.7.11.-" evidence="1"/>
<dbReference type="EC" id="2.7.4.-" evidence="1"/>
<dbReference type="EMBL" id="AJ312124">
    <property type="protein sequence ID" value="CAC39228.1"/>
    <property type="molecule type" value="Genomic_DNA"/>
</dbReference>
<dbReference type="SMR" id="Q93SG0"/>
<dbReference type="GO" id="GO:0005524">
    <property type="term" value="F:ATP binding"/>
    <property type="evidence" value="ECO:0007669"/>
    <property type="project" value="UniProtKB-UniRule"/>
</dbReference>
<dbReference type="GO" id="GO:0000287">
    <property type="term" value="F:magnesium ion binding"/>
    <property type="evidence" value="ECO:0007669"/>
    <property type="project" value="UniProtKB-UniRule"/>
</dbReference>
<dbReference type="GO" id="GO:0000155">
    <property type="term" value="F:phosphorelay sensor kinase activity"/>
    <property type="evidence" value="ECO:0007669"/>
    <property type="project" value="InterPro"/>
</dbReference>
<dbReference type="GO" id="GO:0004674">
    <property type="term" value="F:protein serine/threonine kinase activity"/>
    <property type="evidence" value="ECO:0007669"/>
    <property type="project" value="UniProtKB-KW"/>
</dbReference>
<dbReference type="GO" id="GO:0004712">
    <property type="term" value="F:protein serine/threonine/tyrosine kinase activity"/>
    <property type="evidence" value="ECO:0007669"/>
    <property type="project" value="UniProtKB-UniRule"/>
</dbReference>
<dbReference type="GO" id="GO:0006109">
    <property type="term" value="P:regulation of carbohydrate metabolic process"/>
    <property type="evidence" value="ECO:0007669"/>
    <property type="project" value="UniProtKB-UniRule"/>
</dbReference>
<dbReference type="CDD" id="cd01918">
    <property type="entry name" value="HprK_C"/>
    <property type="match status" value="1"/>
</dbReference>
<dbReference type="FunFam" id="3.40.50.300:FF:000174">
    <property type="entry name" value="HPr kinase/phosphorylase"/>
    <property type="match status" value="1"/>
</dbReference>
<dbReference type="Gene3D" id="3.40.1390.20">
    <property type="entry name" value="HprK N-terminal domain-like"/>
    <property type="match status" value="1"/>
</dbReference>
<dbReference type="Gene3D" id="3.40.50.300">
    <property type="entry name" value="P-loop containing nucleotide triphosphate hydrolases"/>
    <property type="match status" value="1"/>
</dbReference>
<dbReference type="HAMAP" id="MF_01249">
    <property type="entry name" value="HPr_kinase"/>
    <property type="match status" value="1"/>
</dbReference>
<dbReference type="InterPro" id="IPR003755">
    <property type="entry name" value="HPr(Ser)_kin/Pase"/>
</dbReference>
<dbReference type="InterPro" id="IPR011104">
    <property type="entry name" value="Hpr_kin/Pase_C"/>
</dbReference>
<dbReference type="InterPro" id="IPR011126">
    <property type="entry name" value="Hpr_kin/Pase_Hpr_N"/>
</dbReference>
<dbReference type="InterPro" id="IPR027417">
    <property type="entry name" value="P-loop_NTPase"/>
</dbReference>
<dbReference type="InterPro" id="IPR028979">
    <property type="entry name" value="Ser_kin/Pase_Hpr-like_N_sf"/>
</dbReference>
<dbReference type="NCBIfam" id="TIGR00679">
    <property type="entry name" value="hpr-ser"/>
    <property type="match status" value="1"/>
</dbReference>
<dbReference type="PANTHER" id="PTHR30305:SF1">
    <property type="entry name" value="HPR KINASE_PHOSPHORYLASE"/>
    <property type="match status" value="1"/>
</dbReference>
<dbReference type="PANTHER" id="PTHR30305">
    <property type="entry name" value="PROTEIN YJDM-RELATED"/>
    <property type="match status" value="1"/>
</dbReference>
<dbReference type="Pfam" id="PF07475">
    <property type="entry name" value="Hpr_kinase_C"/>
    <property type="match status" value="1"/>
</dbReference>
<dbReference type="Pfam" id="PF02603">
    <property type="entry name" value="Hpr_kinase_N"/>
    <property type="match status" value="1"/>
</dbReference>
<dbReference type="SUPFAM" id="SSF75138">
    <property type="entry name" value="HprK N-terminal domain-like"/>
    <property type="match status" value="1"/>
</dbReference>
<dbReference type="SUPFAM" id="SSF53795">
    <property type="entry name" value="PEP carboxykinase-like"/>
    <property type="match status" value="1"/>
</dbReference>
<comment type="function">
    <text evidence="1">Catalyzes the ATP- as well as the pyrophosphate-dependent phosphorylation of a specific serine residue in HPr, a phosphocarrier protein of the phosphoenolpyruvate-dependent sugar phosphotransferase system (PTS). HprK/P also catalyzes the pyrophosphate-producing, inorganic phosphate-dependent dephosphorylation (phosphorolysis) of seryl-phosphorylated HPr (P-Ser-HPr). The two antagonistic activities of HprK/P are regulated by several intracellular metabolites, which change their concentration in response to the absence or presence of rapidly metabolisable carbon sources (glucose, fructose, etc.) in the growth medium. Therefore, by controlling the phosphorylation state of HPr, HPrK/P is a sensor enzyme that plays a major role in the regulation of carbon metabolism and sugar transport: it mediates carbon catabolite repression (CCR), and regulates PTS-catalyzed carbohydrate uptake and inducer exclusion.</text>
</comment>
<comment type="catalytic activity">
    <reaction evidence="1">
        <text>[HPr protein]-L-serine + ATP = [HPr protein]-O-phospho-L-serine + ADP + H(+)</text>
        <dbReference type="Rhea" id="RHEA:46600"/>
        <dbReference type="Rhea" id="RHEA-COMP:11602"/>
        <dbReference type="Rhea" id="RHEA-COMP:11603"/>
        <dbReference type="ChEBI" id="CHEBI:15378"/>
        <dbReference type="ChEBI" id="CHEBI:29999"/>
        <dbReference type="ChEBI" id="CHEBI:30616"/>
        <dbReference type="ChEBI" id="CHEBI:83421"/>
        <dbReference type="ChEBI" id="CHEBI:456216"/>
    </reaction>
</comment>
<comment type="catalytic activity">
    <reaction evidence="1">
        <text>[HPr protein]-O-phospho-L-serine + phosphate + H(+) = [HPr protein]-L-serine + diphosphate</text>
        <dbReference type="Rhea" id="RHEA:46604"/>
        <dbReference type="Rhea" id="RHEA-COMP:11602"/>
        <dbReference type="Rhea" id="RHEA-COMP:11603"/>
        <dbReference type="ChEBI" id="CHEBI:15378"/>
        <dbReference type="ChEBI" id="CHEBI:29999"/>
        <dbReference type="ChEBI" id="CHEBI:33019"/>
        <dbReference type="ChEBI" id="CHEBI:43474"/>
        <dbReference type="ChEBI" id="CHEBI:83421"/>
    </reaction>
</comment>
<comment type="cofactor">
    <cofactor evidence="1">
        <name>Mg(2+)</name>
        <dbReference type="ChEBI" id="CHEBI:18420"/>
    </cofactor>
</comment>
<comment type="subunit">
    <text evidence="1">Homohexamer.</text>
</comment>
<comment type="domain">
    <text evidence="1">The Walker A ATP-binding motif also binds Pi and PPi.</text>
</comment>
<comment type="miscellaneous">
    <text evidence="1">Both phosphorylation and phosphorolysis are carried out by the same active site and suggest a common mechanism for both reactions.</text>
</comment>
<comment type="similarity">
    <text evidence="1">Belongs to the HPrK/P family.</text>
</comment>
<proteinExistence type="inferred from homology"/>
<protein>
    <recommendedName>
        <fullName evidence="1">HPr kinase/phosphorylase</fullName>
        <shortName evidence="1">HPrK/P</shortName>
        <ecNumber evidence="1">2.7.11.-</ecNumber>
        <ecNumber evidence="1">2.7.4.-</ecNumber>
    </recommendedName>
    <alternativeName>
        <fullName evidence="1">HPr(Ser) kinase/phosphorylase</fullName>
    </alternativeName>
</protein>
<accession>Q93SG0</accession>
<feature type="chain" id="PRO_0000058956" description="HPr kinase/phosphorylase">
    <location>
        <begin position="1"/>
        <end position="308"/>
    </location>
</feature>
<feature type="region of interest" description="Important for the catalytic mechanism of both phosphorylation and dephosphorylation" evidence="1">
    <location>
        <begin position="204"/>
        <end position="213"/>
    </location>
</feature>
<feature type="region of interest" description="Important for the catalytic mechanism of dephosphorylation" evidence="1">
    <location>
        <begin position="267"/>
        <end position="272"/>
    </location>
</feature>
<feature type="active site" evidence="1">
    <location>
        <position position="141"/>
    </location>
</feature>
<feature type="active site" evidence="1">
    <location>
        <position position="162"/>
    </location>
</feature>
<feature type="active site" description="Proton acceptor; for phosphorylation activity. Proton donor; for dephosphorylation activity" evidence="1">
    <location>
        <position position="180"/>
    </location>
</feature>
<feature type="active site" evidence="1">
    <location>
        <position position="246"/>
    </location>
</feature>
<feature type="binding site" evidence="1">
    <location>
        <begin position="156"/>
        <end position="163"/>
    </location>
    <ligand>
        <name>ATP</name>
        <dbReference type="ChEBI" id="CHEBI:30616"/>
    </ligand>
</feature>
<feature type="binding site" evidence="1">
    <location>
        <position position="163"/>
    </location>
    <ligand>
        <name>Mg(2+)</name>
        <dbReference type="ChEBI" id="CHEBI:18420"/>
    </ligand>
</feature>
<feature type="binding site" evidence="1">
    <location>
        <position position="205"/>
    </location>
    <ligand>
        <name>Mg(2+)</name>
        <dbReference type="ChEBI" id="CHEBI:18420"/>
    </ligand>
</feature>
<reference key="1">
    <citation type="journal article" date="2003" name="Arch. Microbiol.">
        <title>Molecular and biochemical characterization of two tungsten- and selenium-containing formate dehydrogenases from Eubacterium acidaminophilum that are associated with components of an iron-only hydrogenase.</title>
        <authorList>
            <person name="Graentzdoerffer A."/>
            <person name="Rauh D."/>
            <person name="Pich A."/>
            <person name="Andreesen J.R."/>
        </authorList>
    </citation>
    <scope>NUCLEOTIDE SEQUENCE [GENOMIC DNA]</scope>
    <source>
        <strain>ATCC 49065 / DSM 3953 / al-2</strain>
    </source>
</reference>
<keyword id="KW-0067">ATP-binding</keyword>
<keyword id="KW-0119">Carbohydrate metabolism</keyword>
<keyword id="KW-0418">Kinase</keyword>
<keyword id="KW-0460">Magnesium</keyword>
<keyword id="KW-0479">Metal-binding</keyword>
<keyword id="KW-0511">Multifunctional enzyme</keyword>
<keyword id="KW-0547">Nucleotide-binding</keyword>
<keyword id="KW-0723">Serine/threonine-protein kinase</keyword>
<keyword id="KW-0808">Transferase</keyword>
<evidence type="ECO:0000255" key="1">
    <source>
        <dbReference type="HAMAP-Rule" id="MF_01249"/>
    </source>
</evidence>
<name>HPRK_PEPAC</name>
<gene>
    <name evidence="1" type="primary">hprK</name>
</gene>